<protein>
    <recommendedName>
        <fullName evidence="1">Putative HTH-type transcriptional regulatory protein STK_12680</fullName>
    </recommendedName>
</protein>
<reference key="1">
    <citation type="journal article" date="2001" name="DNA Res.">
        <title>Complete genome sequence of an aerobic thermoacidophilic Crenarchaeon, Sulfolobus tokodaii strain7.</title>
        <authorList>
            <person name="Kawarabayasi Y."/>
            <person name="Hino Y."/>
            <person name="Horikawa H."/>
            <person name="Jin-no K."/>
            <person name="Takahashi M."/>
            <person name="Sekine M."/>
            <person name="Baba S."/>
            <person name="Ankai A."/>
            <person name="Kosugi H."/>
            <person name="Hosoyama A."/>
            <person name="Fukui S."/>
            <person name="Nagai Y."/>
            <person name="Nishijima K."/>
            <person name="Otsuka R."/>
            <person name="Nakazawa H."/>
            <person name="Takamiya M."/>
            <person name="Kato Y."/>
            <person name="Yoshizawa T."/>
            <person name="Tanaka T."/>
            <person name="Kudoh Y."/>
            <person name="Yamazaki J."/>
            <person name="Kushida N."/>
            <person name="Oguchi A."/>
            <person name="Aoki K."/>
            <person name="Masuda S."/>
            <person name="Yanagii M."/>
            <person name="Nishimura M."/>
            <person name="Yamagishi A."/>
            <person name="Oshima T."/>
            <person name="Kikuchi H."/>
        </authorList>
    </citation>
    <scope>NUCLEOTIDE SEQUENCE [LARGE SCALE GENOMIC DNA]</scope>
    <source>
        <strain>DSM 16993 / JCM 10545 / NBRC 100140 / 7</strain>
    </source>
</reference>
<accession>Q971W0</accession>
<accession>F9VNZ4</accession>
<organism>
    <name type="scientific">Sulfurisphaera tokodaii (strain DSM 16993 / JCM 10545 / NBRC 100140 / 7)</name>
    <name type="common">Sulfolobus tokodaii</name>
    <dbReference type="NCBI Taxonomy" id="273063"/>
    <lineage>
        <taxon>Archaea</taxon>
        <taxon>Thermoproteota</taxon>
        <taxon>Thermoprotei</taxon>
        <taxon>Sulfolobales</taxon>
        <taxon>Sulfolobaceae</taxon>
        <taxon>Sulfurisphaera</taxon>
    </lineage>
</organism>
<dbReference type="EMBL" id="BA000023">
    <property type="protein sequence ID" value="BAK54502.1"/>
    <property type="molecule type" value="Genomic_DNA"/>
</dbReference>
<dbReference type="RefSeq" id="WP_198429766.1">
    <property type="nucleotide sequence ID" value="NC_003106.2"/>
</dbReference>
<dbReference type="SMR" id="Q971W0"/>
<dbReference type="STRING" id="273063.STK_12680"/>
<dbReference type="GeneID" id="1459268"/>
<dbReference type="KEGG" id="sto:STK_12680"/>
<dbReference type="PATRIC" id="fig|273063.9.peg.1426"/>
<dbReference type="eggNOG" id="arCOG04152">
    <property type="taxonomic scope" value="Archaea"/>
</dbReference>
<dbReference type="OrthoDB" id="31424at2157"/>
<dbReference type="Proteomes" id="UP000001015">
    <property type="component" value="Chromosome"/>
</dbReference>
<dbReference type="GO" id="GO:0003677">
    <property type="term" value="F:DNA binding"/>
    <property type="evidence" value="ECO:0007669"/>
    <property type="project" value="UniProtKB-KW"/>
</dbReference>
<dbReference type="GO" id="GO:0003700">
    <property type="term" value="F:DNA-binding transcription factor activity"/>
    <property type="evidence" value="ECO:0007669"/>
    <property type="project" value="UniProtKB-UniRule"/>
</dbReference>
<dbReference type="CDD" id="cd00093">
    <property type="entry name" value="HTH_XRE"/>
    <property type="match status" value="1"/>
</dbReference>
<dbReference type="Gene3D" id="1.10.260.40">
    <property type="entry name" value="lambda repressor-like DNA-binding domains"/>
    <property type="match status" value="1"/>
</dbReference>
<dbReference type="HAMAP" id="MF_00584">
    <property type="entry name" value="HTH_type_cro_C1"/>
    <property type="match status" value="1"/>
</dbReference>
<dbReference type="InterPro" id="IPR020886">
    <property type="entry name" value="Arc_TR_HTH"/>
</dbReference>
<dbReference type="InterPro" id="IPR001387">
    <property type="entry name" value="Cro/C1-type_HTH"/>
</dbReference>
<dbReference type="InterPro" id="IPR010982">
    <property type="entry name" value="Lambda_DNA-bd_dom_sf"/>
</dbReference>
<dbReference type="Pfam" id="PF01381">
    <property type="entry name" value="HTH_3"/>
    <property type="match status" value="1"/>
</dbReference>
<dbReference type="SMART" id="SM00530">
    <property type="entry name" value="HTH_XRE"/>
    <property type="match status" value="1"/>
</dbReference>
<dbReference type="SUPFAM" id="SSF47413">
    <property type="entry name" value="lambda repressor-like DNA-binding domains"/>
    <property type="match status" value="1"/>
</dbReference>
<dbReference type="PROSITE" id="PS50943">
    <property type="entry name" value="HTH_CROC1"/>
    <property type="match status" value="1"/>
</dbReference>
<feature type="chain" id="PRO_0000144867" description="Putative HTH-type transcriptional regulatory protein STK_12680">
    <location>
        <begin position="1"/>
        <end position="294"/>
    </location>
</feature>
<feature type="domain" description="HTH cro/C1-type" evidence="1">
    <location>
        <begin position="123"/>
        <end position="175"/>
    </location>
</feature>
<feature type="DNA-binding region" description="H-T-H motif" evidence="1">
    <location>
        <begin position="134"/>
        <end position="153"/>
    </location>
</feature>
<proteinExistence type="inferred from homology"/>
<evidence type="ECO:0000255" key="1">
    <source>
        <dbReference type="HAMAP-Rule" id="MF_00584"/>
    </source>
</evidence>
<name>Y1268_SULTO</name>
<keyword id="KW-0238">DNA-binding</keyword>
<keyword id="KW-1185">Reference proteome</keyword>
<keyword id="KW-0804">Transcription</keyword>
<keyword id="KW-0805">Transcription regulation</keyword>
<gene>
    <name type="ordered locus">STK_12680</name>
</gene>
<sequence>MVTIDEVAEILSKRSLEYSMINYPDKKEKSIDIIAVNRNKKMIVKILGNKKSSKIKSDLKNIARIGLGIPVIIEDSTEQEIINDRGNILGMNVETFERILDGEKVFLYKTRGGIFVKINSKELKKKREEMGLSLGEVAQALGVSRISIYDYEREDSYVSIDIAEKLVELFGDDILGDVLSGFKVDEKDINLETQTASLSDKIMLNLNEKGYKVVKMNFTAVDIIASKNDKKLLFSVEADNVSKSLRKFNEAKKITSKIKASLIVVVKESKNKKIYEKEDFNTISENEIMNYEFD</sequence>